<name>ATPF_SHEB5</name>
<dbReference type="EMBL" id="CP000563">
    <property type="protein sequence ID" value="ABN63831.1"/>
    <property type="molecule type" value="Genomic_DNA"/>
</dbReference>
<dbReference type="RefSeq" id="WP_011848295.1">
    <property type="nucleotide sequence ID" value="NC_009052.1"/>
</dbReference>
<dbReference type="SMR" id="A3DAR8"/>
<dbReference type="STRING" id="325240.Sbal_4370"/>
<dbReference type="KEGG" id="sbl:Sbal_4370"/>
<dbReference type="HOGENOM" id="CLU_079215_4_5_6"/>
<dbReference type="OrthoDB" id="9788020at2"/>
<dbReference type="Proteomes" id="UP000001557">
    <property type="component" value="Chromosome"/>
</dbReference>
<dbReference type="GO" id="GO:0005886">
    <property type="term" value="C:plasma membrane"/>
    <property type="evidence" value="ECO:0007669"/>
    <property type="project" value="UniProtKB-SubCell"/>
</dbReference>
<dbReference type="GO" id="GO:0045259">
    <property type="term" value="C:proton-transporting ATP synthase complex"/>
    <property type="evidence" value="ECO:0007669"/>
    <property type="project" value="UniProtKB-KW"/>
</dbReference>
<dbReference type="GO" id="GO:0046933">
    <property type="term" value="F:proton-transporting ATP synthase activity, rotational mechanism"/>
    <property type="evidence" value="ECO:0007669"/>
    <property type="project" value="UniProtKB-UniRule"/>
</dbReference>
<dbReference type="GO" id="GO:0046961">
    <property type="term" value="F:proton-transporting ATPase activity, rotational mechanism"/>
    <property type="evidence" value="ECO:0007669"/>
    <property type="project" value="TreeGrafter"/>
</dbReference>
<dbReference type="CDD" id="cd06503">
    <property type="entry name" value="ATP-synt_Fo_b"/>
    <property type="match status" value="1"/>
</dbReference>
<dbReference type="FunFam" id="1.20.5.620:FF:000001">
    <property type="entry name" value="ATP synthase subunit b"/>
    <property type="match status" value="1"/>
</dbReference>
<dbReference type="Gene3D" id="1.20.5.620">
    <property type="entry name" value="F1F0 ATP synthase subunit B, membrane domain"/>
    <property type="match status" value="1"/>
</dbReference>
<dbReference type="HAMAP" id="MF_01398">
    <property type="entry name" value="ATP_synth_b_bprime"/>
    <property type="match status" value="1"/>
</dbReference>
<dbReference type="InterPro" id="IPR028987">
    <property type="entry name" value="ATP_synth_B-like_membr_sf"/>
</dbReference>
<dbReference type="InterPro" id="IPR002146">
    <property type="entry name" value="ATP_synth_b/b'su_bac/chlpt"/>
</dbReference>
<dbReference type="InterPro" id="IPR005864">
    <property type="entry name" value="ATP_synth_F0_bsu_bac"/>
</dbReference>
<dbReference type="InterPro" id="IPR050059">
    <property type="entry name" value="ATP_synthase_B_chain"/>
</dbReference>
<dbReference type="NCBIfam" id="TIGR01144">
    <property type="entry name" value="ATP_synt_b"/>
    <property type="match status" value="1"/>
</dbReference>
<dbReference type="NCBIfam" id="NF004411">
    <property type="entry name" value="PRK05759.1-2"/>
    <property type="match status" value="1"/>
</dbReference>
<dbReference type="NCBIfam" id="NF004413">
    <property type="entry name" value="PRK05759.1-4"/>
    <property type="match status" value="1"/>
</dbReference>
<dbReference type="PANTHER" id="PTHR33445:SF1">
    <property type="entry name" value="ATP SYNTHASE SUBUNIT B"/>
    <property type="match status" value="1"/>
</dbReference>
<dbReference type="PANTHER" id="PTHR33445">
    <property type="entry name" value="ATP SYNTHASE SUBUNIT B', CHLOROPLASTIC"/>
    <property type="match status" value="1"/>
</dbReference>
<dbReference type="Pfam" id="PF00430">
    <property type="entry name" value="ATP-synt_B"/>
    <property type="match status" value="1"/>
</dbReference>
<dbReference type="SUPFAM" id="SSF81573">
    <property type="entry name" value="F1F0 ATP synthase subunit B, membrane domain"/>
    <property type="match status" value="1"/>
</dbReference>
<gene>
    <name evidence="1" type="primary">atpF</name>
    <name type="ordered locus">Sbal_4370</name>
</gene>
<organism>
    <name type="scientific">Shewanella baltica (strain OS155 / ATCC BAA-1091)</name>
    <dbReference type="NCBI Taxonomy" id="325240"/>
    <lineage>
        <taxon>Bacteria</taxon>
        <taxon>Pseudomonadati</taxon>
        <taxon>Pseudomonadota</taxon>
        <taxon>Gammaproteobacteria</taxon>
        <taxon>Alteromonadales</taxon>
        <taxon>Shewanellaceae</taxon>
        <taxon>Shewanella</taxon>
    </lineage>
</organism>
<keyword id="KW-0066">ATP synthesis</keyword>
<keyword id="KW-0997">Cell inner membrane</keyword>
<keyword id="KW-1003">Cell membrane</keyword>
<keyword id="KW-0138">CF(0)</keyword>
<keyword id="KW-0375">Hydrogen ion transport</keyword>
<keyword id="KW-0406">Ion transport</keyword>
<keyword id="KW-0472">Membrane</keyword>
<keyword id="KW-1185">Reference proteome</keyword>
<keyword id="KW-0812">Transmembrane</keyword>
<keyword id="KW-1133">Transmembrane helix</keyword>
<keyword id="KW-0813">Transport</keyword>
<evidence type="ECO:0000255" key="1">
    <source>
        <dbReference type="HAMAP-Rule" id="MF_01398"/>
    </source>
</evidence>
<proteinExistence type="inferred from homology"/>
<sequence length="156" mass="17426">MNFNATLIGQTVAFIIFVWFCMKFVWPPLMNAIEERQKRIADGLADADRAVKDLELAQAKATDQLKEAKVTANEIIEQANKRKAQIVEEAKTEANAERAKIIAQGKAEIEAERNRVKEDLRKQVATLAIMGAEKILERSIDPAAHSDIVNKLVAEI</sequence>
<accession>A3DAR8</accession>
<protein>
    <recommendedName>
        <fullName evidence="1">ATP synthase subunit b</fullName>
    </recommendedName>
    <alternativeName>
        <fullName evidence="1">ATP synthase F(0) sector subunit b</fullName>
    </alternativeName>
    <alternativeName>
        <fullName evidence="1">ATPase subunit I</fullName>
    </alternativeName>
    <alternativeName>
        <fullName evidence="1">F-type ATPase subunit b</fullName>
        <shortName evidence="1">F-ATPase subunit b</shortName>
    </alternativeName>
</protein>
<feature type="chain" id="PRO_0000368754" description="ATP synthase subunit b">
    <location>
        <begin position="1"/>
        <end position="156"/>
    </location>
</feature>
<feature type="transmembrane region" description="Helical" evidence="1">
    <location>
        <begin position="7"/>
        <end position="27"/>
    </location>
</feature>
<comment type="function">
    <text evidence="1">F(1)F(0) ATP synthase produces ATP from ADP in the presence of a proton or sodium gradient. F-type ATPases consist of two structural domains, F(1) containing the extramembraneous catalytic core and F(0) containing the membrane proton channel, linked together by a central stalk and a peripheral stalk. During catalysis, ATP synthesis in the catalytic domain of F(1) is coupled via a rotary mechanism of the central stalk subunits to proton translocation.</text>
</comment>
<comment type="function">
    <text evidence="1">Component of the F(0) channel, it forms part of the peripheral stalk, linking F(1) to F(0).</text>
</comment>
<comment type="subunit">
    <text evidence="1">F-type ATPases have 2 components, F(1) - the catalytic core - and F(0) - the membrane proton channel. F(1) has five subunits: alpha(3), beta(3), gamma(1), delta(1), epsilon(1). F(0) has three main subunits: a(1), b(2) and c(10-14). The alpha and beta chains form an alternating ring which encloses part of the gamma chain. F(1) is attached to F(0) by a central stalk formed by the gamma and epsilon chains, while a peripheral stalk is formed by the delta and b chains.</text>
</comment>
<comment type="subcellular location">
    <subcellularLocation>
        <location evidence="1">Cell inner membrane</location>
        <topology evidence="1">Single-pass membrane protein</topology>
    </subcellularLocation>
</comment>
<comment type="similarity">
    <text evidence="1">Belongs to the ATPase B chain family.</text>
</comment>
<reference key="1">
    <citation type="submission" date="2007-02" db="EMBL/GenBank/DDBJ databases">
        <title>Complete sequence of chromosome of Shewanella baltica OS155.</title>
        <authorList>
            <consortium name="US DOE Joint Genome Institute"/>
            <person name="Copeland A."/>
            <person name="Lucas S."/>
            <person name="Lapidus A."/>
            <person name="Barry K."/>
            <person name="Detter J.C."/>
            <person name="Glavina del Rio T."/>
            <person name="Hammon N."/>
            <person name="Israni S."/>
            <person name="Dalin E."/>
            <person name="Tice H."/>
            <person name="Pitluck S."/>
            <person name="Sims D.R."/>
            <person name="Brettin T."/>
            <person name="Bruce D."/>
            <person name="Han C."/>
            <person name="Tapia R."/>
            <person name="Brainard J."/>
            <person name="Schmutz J."/>
            <person name="Larimer F."/>
            <person name="Land M."/>
            <person name="Hauser L."/>
            <person name="Kyrpides N."/>
            <person name="Mikhailova N."/>
            <person name="Brettar I."/>
            <person name="Klappenbach J."/>
            <person name="Konstantinidis K."/>
            <person name="Rodrigues J."/>
            <person name="Tiedje J."/>
            <person name="Richardson P."/>
        </authorList>
    </citation>
    <scope>NUCLEOTIDE SEQUENCE [LARGE SCALE GENOMIC DNA]</scope>
    <source>
        <strain>OS155 / ATCC BAA-1091</strain>
    </source>
</reference>